<dbReference type="EC" id="3.1.26.11" evidence="1"/>
<dbReference type="EMBL" id="CP001104">
    <property type="protein sequence ID" value="ACR71414.1"/>
    <property type="molecule type" value="Genomic_DNA"/>
</dbReference>
<dbReference type="RefSeq" id="WP_012738651.1">
    <property type="nucleotide sequence ID" value="NC_012778.1"/>
</dbReference>
<dbReference type="SMR" id="C4Z309"/>
<dbReference type="STRING" id="515620.EUBELI_00378"/>
<dbReference type="GeneID" id="41355150"/>
<dbReference type="KEGG" id="eel:EUBELI_00378"/>
<dbReference type="eggNOG" id="COG1234">
    <property type="taxonomic scope" value="Bacteria"/>
</dbReference>
<dbReference type="HOGENOM" id="CLU_031317_2_1_9"/>
<dbReference type="Proteomes" id="UP000001476">
    <property type="component" value="Chromosome"/>
</dbReference>
<dbReference type="GO" id="GO:0042781">
    <property type="term" value="F:3'-tRNA processing endoribonuclease activity"/>
    <property type="evidence" value="ECO:0007669"/>
    <property type="project" value="UniProtKB-UniRule"/>
</dbReference>
<dbReference type="GO" id="GO:0008270">
    <property type="term" value="F:zinc ion binding"/>
    <property type="evidence" value="ECO:0007669"/>
    <property type="project" value="UniProtKB-UniRule"/>
</dbReference>
<dbReference type="CDD" id="cd07717">
    <property type="entry name" value="RNaseZ_ZiPD-like_MBL-fold"/>
    <property type="match status" value="1"/>
</dbReference>
<dbReference type="Gene3D" id="3.60.15.10">
    <property type="entry name" value="Ribonuclease Z/Hydroxyacylglutathione hydrolase-like"/>
    <property type="match status" value="1"/>
</dbReference>
<dbReference type="HAMAP" id="MF_01818">
    <property type="entry name" value="RNase_Z_BN"/>
    <property type="match status" value="1"/>
</dbReference>
<dbReference type="InterPro" id="IPR001279">
    <property type="entry name" value="Metallo-B-lactamas"/>
</dbReference>
<dbReference type="InterPro" id="IPR036866">
    <property type="entry name" value="RibonucZ/Hydroxyglut_hydro"/>
</dbReference>
<dbReference type="InterPro" id="IPR013471">
    <property type="entry name" value="RNase_Z/BN"/>
</dbReference>
<dbReference type="NCBIfam" id="NF000801">
    <property type="entry name" value="PRK00055.1-3"/>
    <property type="match status" value="1"/>
</dbReference>
<dbReference type="NCBIfam" id="TIGR02651">
    <property type="entry name" value="RNase_Z"/>
    <property type="match status" value="1"/>
</dbReference>
<dbReference type="PANTHER" id="PTHR46018">
    <property type="entry name" value="ZINC PHOSPHODIESTERASE ELAC PROTEIN 1"/>
    <property type="match status" value="1"/>
</dbReference>
<dbReference type="PANTHER" id="PTHR46018:SF2">
    <property type="entry name" value="ZINC PHOSPHODIESTERASE ELAC PROTEIN 1"/>
    <property type="match status" value="1"/>
</dbReference>
<dbReference type="Pfam" id="PF00753">
    <property type="entry name" value="Lactamase_B"/>
    <property type="match status" value="1"/>
</dbReference>
<dbReference type="SUPFAM" id="SSF56281">
    <property type="entry name" value="Metallo-hydrolase/oxidoreductase"/>
    <property type="match status" value="1"/>
</dbReference>
<sequence length="304" mass="33813">MLDVCLLGTSGMLPLPGRWLTSLMTRYNGSSLMIDCGEGTQIAVKQKGWSFNPIDVICFTHYHADHISGLPGLLLTIGNSDRKKPLTLVGPKGLGRVVSSLRVIAPELPFELKFIELTNQQEHLSICGYEIDAFRVNHAVICYGYSISIPRIGKFDVEKAKELGIPCSMWNKLQHGTAVTIDDKEYTPDMVMGAARKGLKVTYCTDSRPVQIISDNAKESDLFICEGMYGEDGKEAKAKEYKHMTFTEAAQLAKNADVREMWLTHYSPSLVRPQDYVDKARKIFPATIAANDGRTVELKFDDEG</sequence>
<organism>
    <name type="scientific">Lachnospira eligens (strain ATCC 27750 / DSM 3376 / VPI C15-48 / C15-B4)</name>
    <name type="common">Eubacterium eligens</name>
    <dbReference type="NCBI Taxonomy" id="515620"/>
    <lineage>
        <taxon>Bacteria</taxon>
        <taxon>Bacillati</taxon>
        <taxon>Bacillota</taxon>
        <taxon>Clostridia</taxon>
        <taxon>Lachnospirales</taxon>
        <taxon>Lachnospiraceae</taxon>
        <taxon>Lachnospira</taxon>
    </lineage>
</organism>
<gene>
    <name evidence="1" type="primary">rnz</name>
    <name type="ordered locus">EUBELI_00378</name>
</gene>
<comment type="function">
    <text evidence="1">Zinc phosphodiesterase, which displays some tRNA 3'-processing endonuclease activity. Probably involved in tRNA maturation, by removing a 3'-trailer from precursor tRNA.</text>
</comment>
<comment type="catalytic activity">
    <reaction evidence="1">
        <text>Endonucleolytic cleavage of RNA, removing extra 3' nucleotides from tRNA precursor, generating 3' termini of tRNAs. A 3'-hydroxy group is left at the tRNA terminus and a 5'-phosphoryl group is left at the trailer molecule.</text>
        <dbReference type="EC" id="3.1.26.11"/>
    </reaction>
</comment>
<comment type="cofactor">
    <cofactor evidence="1">
        <name>Zn(2+)</name>
        <dbReference type="ChEBI" id="CHEBI:29105"/>
    </cofactor>
    <text evidence="1">Binds 2 Zn(2+) ions.</text>
</comment>
<comment type="subunit">
    <text evidence="1">Homodimer.</text>
</comment>
<comment type="similarity">
    <text evidence="1">Belongs to the RNase Z family.</text>
</comment>
<reference key="1">
    <citation type="journal article" date="2009" name="Proc. Natl. Acad. Sci. U.S.A.">
        <title>Characterizing a model human gut microbiota composed of members of its two dominant bacterial phyla.</title>
        <authorList>
            <person name="Mahowald M.A."/>
            <person name="Rey F.E."/>
            <person name="Seedorf H."/>
            <person name="Turnbaugh P.J."/>
            <person name="Fulton R.S."/>
            <person name="Wollam A."/>
            <person name="Shah N."/>
            <person name="Wang C."/>
            <person name="Magrini V."/>
            <person name="Wilson R.K."/>
            <person name="Cantarel B.L."/>
            <person name="Coutinho P.M."/>
            <person name="Henrissat B."/>
            <person name="Crock L.W."/>
            <person name="Russell A."/>
            <person name="Verberkmoes N.C."/>
            <person name="Hettich R.L."/>
            <person name="Gordon J.I."/>
        </authorList>
    </citation>
    <scope>NUCLEOTIDE SEQUENCE [LARGE SCALE GENOMIC DNA]</scope>
    <source>
        <strain>ATCC 27750 / DSM 3376 / VPI C15-48 / C15-B4</strain>
    </source>
</reference>
<proteinExistence type="inferred from homology"/>
<accession>C4Z309</accession>
<evidence type="ECO:0000255" key="1">
    <source>
        <dbReference type="HAMAP-Rule" id="MF_01818"/>
    </source>
</evidence>
<protein>
    <recommendedName>
        <fullName evidence="1">Ribonuclease Z</fullName>
        <shortName evidence="1">RNase Z</shortName>
        <ecNumber evidence="1">3.1.26.11</ecNumber>
    </recommendedName>
    <alternativeName>
        <fullName evidence="1">tRNA 3 endonuclease</fullName>
    </alternativeName>
    <alternativeName>
        <fullName evidence="1">tRNase Z</fullName>
    </alternativeName>
</protein>
<feature type="chain" id="PRO_1000216006" description="Ribonuclease Z">
    <location>
        <begin position="1"/>
        <end position="304"/>
    </location>
</feature>
<feature type="active site" description="Proton acceptor" evidence="1">
    <location>
        <position position="65"/>
    </location>
</feature>
<feature type="binding site" evidence="1">
    <location>
        <position position="61"/>
    </location>
    <ligand>
        <name>Zn(2+)</name>
        <dbReference type="ChEBI" id="CHEBI:29105"/>
        <label>1</label>
        <note>catalytic</note>
    </ligand>
</feature>
<feature type="binding site" evidence="1">
    <location>
        <position position="63"/>
    </location>
    <ligand>
        <name>Zn(2+)</name>
        <dbReference type="ChEBI" id="CHEBI:29105"/>
        <label>1</label>
        <note>catalytic</note>
    </ligand>
</feature>
<feature type="binding site" evidence="1">
    <location>
        <position position="65"/>
    </location>
    <ligand>
        <name>Zn(2+)</name>
        <dbReference type="ChEBI" id="CHEBI:29105"/>
        <label>2</label>
        <note>catalytic</note>
    </ligand>
</feature>
<feature type="binding site" evidence="1">
    <location>
        <position position="66"/>
    </location>
    <ligand>
        <name>Zn(2+)</name>
        <dbReference type="ChEBI" id="CHEBI:29105"/>
        <label>2</label>
        <note>catalytic</note>
    </ligand>
</feature>
<feature type="binding site" evidence="1">
    <location>
        <position position="138"/>
    </location>
    <ligand>
        <name>Zn(2+)</name>
        <dbReference type="ChEBI" id="CHEBI:29105"/>
        <label>1</label>
        <note>catalytic</note>
    </ligand>
</feature>
<feature type="binding site" evidence="1">
    <location>
        <position position="206"/>
    </location>
    <ligand>
        <name>Zn(2+)</name>
        <dbReference type="ChEBI" id="CHEBI:29105"/>
        <label>1</label>
        <note>catalytic</note>
    </ligand>
</feature>
<feature type="binding site" evidence="1">
    <location>
        <position position="206"/>
    </location>
    <ligand>
        <name>Zn(2+)</name>
        <dbReference type="ChEBI" id="CHEBI:29105"/>
        <label>2</label>
        <note>catalytic</note>
    </ligand>
</feature>
<feature type="binding site" evidence="1">
    <location>
        <position position="265"/>
    </location>
    <ligand>
        <name>Zn(2+)</name>
        <dbReference type="ChEBI" id="CHEBI:29105"/>
        <label>2</label>
        <note>catalytic</note>
    </ligand>
</feature>
<name>RNZ_LACE2</name>
<keyword id="KW-0255">Endonuclease</keyword>
<keyword id="KW-0378">Hydrolase</keyword>
<keyword id="KW-0479">Metal-binding</keyword>
<keyword id="KW-0540">Nuclease</keyword>
<keyword id="KW-1185">Reference proteome</keyword>
<keyword id="KW-0819">tRNA processing</keyword>
<keyword id="KW-0862">Zinc</keyword>